<gene>
    <name type="ordered locus">P9303_27301</name>
</gene>
<feature type="chain" id="PRO_0000377020" description="1,4-dihydroxy-2-naphthoyl-CoA hydrolase">
    <location>
        <begin position="1"/>
        <end position="151"/>
    </location>
</feature>
<feature type="active site" evidence="1">
    <location>
        <position position="19"/>
    </location>
</feature>
<evidence type="ECO:0000255" key="1">
    <source>
        <dbReference type="HAMAP-Rule" id="MF_02101"/>
    </source>
</evidence>
<accession>A2CDA0</accession>
<reference key="1">
    <citation type="journal article" date="2007" name="PLoS Genet.">
        <title>Patterns and implications of gene gain and loss in the evolution of Prochlorococcus.</title>
        <authorList>
            <person name="Kettler G.C."/>
            <person name="Martiny A.C."/>
            <person name="Huang K."/>
            <person name="Zucker J."/>
            <person name="Coleman M.L."/>
            <person name="Rodrigue S."/>
            <person name="Chen F."/>
            <person name="Lapidus A."/>
            <person name="Ferriera S."/>
            <person name="Johnson J."/>
            <person name="Steglich C."/>
            <person name="Church G.M."/>
            <person name="Richardson P."/>
            <person name="Chisholm S.W."/>
        </authorList>
    </citation>
    <scope>NUCLEOTIDE SEQUENCE [LARGE SCALE GENOMIC DNA]</scope>
    <source>
        <strain>MIT 9303</strain>
    </source>
</reference>
<dbReference type="EC" id="3.1.2.28" evidence="1"/>
<dbReference type="EMBL" id="CP000554">
    <property type="protein sequence ID" value="ABM79460.1"/>
    <property type="molecule type" value="Genomic_DNA"/>
</dbReference>
<dbReference type="RefSeq" id="WP_011827303.1">
    <property type="nucleotide sequence ID" value="NC_008820.1"/>
</dbReference>
<dbReference type="SMR" id="A2CDA0"/>
<dbReference type="STRING" id="59922.P9303_27301"/>
<dbReference type="KEGG" id="pmf:P9303_27301"/>
<dbReference type="HOGENOM" id="CLU_101141_5_3_3"/>
<dbReference type="BioCyc" id="PMAR59922:G1G80-2393-MONOMER"/>
<dbReference type="UniPathway" id="UPA00995"/>
<dbReference type="UniPathway" id="UPA01057">
    <property type="reaction ID" value="UER01033"/>
</dbReference>
<dbReference type="Proteomes" id="UP000002274">
    <property type="component" value="Chromosome"/>
</dbReference>
<dbReference type="GO" id="GO:0061522">
    <property type="term" value="F:1,4-dihydroxy-2-naphthoyl-CoA thioesterase activity"/>
    <property type="evidence" value="ECO:0007669"/>
    <property type="project" value="UniProtKB-EC"/>
</dbReference>
<dbReference type="GO" id="GO:0042372">
    <property type="term" value="P:phylloquinone biosynthetic process"/>
    <property type="evidence" value="ECO:0007669"/>
    <property type="project" value="UniProtKB-UniRule"/>
</dbReference>
<dbReference type="CDD" id="cd00586">
    <property type="entry name" value="4HBT"/>
    <property type="match status" value="1"/>
</dbReference>
<dbReference type="Gene3D" id="3.10.129.10">
    <property type="entry name" value="Hotdog Thioesterase"/>
    <property type="match status" value="1"/>
</dbReference>
<dbReference type="HAMAP" id="MF_02101">
    <property type="entry name" value="DHNA_CoA_hydrolase"/>
    <property type="match status" value="1"/>
</dbReference>
<dbReference type="InterPro" id="IPR022829">
    <property type="entry name" value="DHNA_CoA_hydrolase"/>
</dbReference>
<dbReference type="InterPro" id="IPR029069">
    <property type="entry name" value="HotDog_dom_sf"/>
</dbReference>
<dbReference type="Pfam" id="PF13279">
    <property type="entry name" value="4HBT_2"/>
    <property type="match status" value="1"/>
</dbReference>
<dbReference type="SUPFAM" id="SSF54637">
    <property type="entry name" value="Thioesterase/thiol ester dehydrase-isomerase"/>
    <property type="match status" value="1"/>
</dbReference>
<proteinExistence type="inferred from homology"/>
<comment type="function">
    <text evidence="1">Catalyzes the hydrolysis of 1,4-dihydroxy-2-naphthoyl-CoA (DHNA-CoA) to 1,4-dihydroxy-2-naphthoate (DHNA), a reaction involved in phylloquinone (vitamin K1) biosynthesis.</text>
</comment>
<comment type="catalytic activity">
    <reaction evidence="1">
        <text>1,4-dihydroxy-2-naphthoyl-CoA + H2O = 1,4-dihydroxy-2-naphthoate + CoA + H(+)</text>
        <dbReference type="Rhea" id="RHEA:26309"/>
        <dbReference type="ChEBI" id="CHEBI:11173"/>
        <dbReference type="ChEBI" id="CHEBI:15377"/>
        <dbReference type="ChEBI" id="CHEBI:15378"/>
        <dbReference type="ChEBI" id="CHEBI:57287"/>
        <dbReference type="ChEBI" id="CHEBI:58897"/>
        <dbReference type="EC" id="3.1.2.28"/>
    </reaction>
</comment>
<comment type="pathway">
    <text evidence="1">Cofactor biosynthesis; phylloquinone biosynthesis.</text>
</comment>
<comment type="pathway">
    <text evidence="1">Quinol/quinone metabolism; 1,4-dihydroxy-2-naphthoate biosynthesis; 1,4-dihydroxy-2-naphthoate from chorismate: step 7/7.</text>
</comment>
<comment type="similarity">
    <text evidence="1">Belongs to the 4-hydroxybenzoyl-CoA thioesterase family. DHNA-CoA hydrolase subfamily.</text>
</comment>
<sequence length="151" mass="17316">MNPENWLLLRRVVRFGDTDAAGVMHFHQLFRWCHEAWEESLEQYGLTPAEIFPGSRKSEVTPEVALPIIHCQADFRRPIHSGDALAMELRPERLNPNSFQVHFEFRCEEQIAAHALIRHLAINAKTRHRCALPEGIDRWLEASGVGKIGSI</sequence>
<keyword id="KW-0378">Hydrolase</keyword>
<organism>
    <name type="scientific">Prochlorococcus marinus (strain MIT 9303)</name>
    <dbReference type="NCBI Taxonomy" id="59922"/>
    <lineage>
        <taxon>Bacteria</taxon>
        <taxon>Bacillati</taxon>
        <taxon>Cyanobacteriota</taxon>
        <taxon>Cyanophyceae</taxon>
        <taxon>Synechococcales</taxon>
        <taxon>Prochlorococcaceae</taxon>
        <taxon>Prochlorococcus</taxon>
    </lineage>
</organism>
<name>DNCH_PROM3</name>
<protein>
    <recommendedName>
        <fullName evidence="1">1,4-dihydroxy-2-naphthoyl-CoA hydrolase</fullName>
        <shortName evidence="1">DHNA-CoA hydrolase</shortName>
        <ecNumber evidence="1">3.1.2.28</ecNumber>
    </recommendedName>
    <alternativeName>
        <fullName evidence="1">DHNA-CoA thioesterase</fullName>
    </alternativeName>
</protein>